<comment type="function">
    <text evidence="1">Involved in the biosynthesis of isopentenyl diphosphate (IPP) and dimethylallyl diphosphate (DMAPP), two major building blocks of isoprenoid compounds. Catalyzes the conversion of 4-diphosphocytidyl-2-C-methyl-D-erythritol 2-phosphate (CDP-ME2P) to 2-C-methyl-D-erythritol 2,4-cyclodiphosphate (ME-CPP) with a corresponding release of cytidine 5-monophosphate (CMP).</text>
</comment>
<comment type="catalytic activity">
    <reaction evidence="1">
        <text>4-CDP-2-C-methyl-D-erythritol 2-phosphate = 2-C-methyl-D-erythritol 2,4-cyclic diphosphate + CMP</text>
        <dbReference type="Rhea" id="RHEA:23864"/>
        <dbReference type="ChEBI" id="CHEBI:57919"/>
        <dbReference type="ChEBI" id="CHEBI:58483"/>
        <dbReference type="ChEBI" id="CHEBI:60377"/>
        <dbReference type="EC" id="4.6.1.12"/>
    </reaction>
</comment>
<comment type="cofactor">
    <cofactor evidence="1">
        <name>a divalent metal cation</name>
        <dbReference type="ChEBI" id="CHEBI:60240"/>
    </cofactor>
    <text evidence="1">Binds 1 divalent metal cation per subunit.</text>
</comment>
<comment type="pathway">
    <text evidence="1">Isoprenoid biosynthesis; isopentenyl diphosphate biosynthesis via DXP pathway; isopentenyl diphosphate from 1-deoxy-D-xylulose 5-phosphate: step 4/6.</text>
</comment>
<comment type="subunit">
    <text evidence="1">Homotrimer.</text>
</comment>
<comment type="similarity">
    <text evidence="1">Belongs to the IspF family.</text>
</comment>
<evidence type="ECO:0000255" key="1">
    <source>
        <dbReference type="HAMAP-Rule" id="MF_00107"/>
    </source>
</evidence>
<gene>
    <name evidence="1" type="primary">ispF</name>
    <name type="ordered locus">BQ2027_MB3612C</name>
</gene>
<reference key="1">
    <citation type="journal article" date="2003" name="Proc. Natl. Acad. Sci. U.S.A.">
        <title>The complete genome sequence of Mycobacterium bovis.</title>
        <authorList>
            <person name="Garnier T."/>
            <person name="Eiglmeier K."/>
            <person name="Camus J.-C."/>
            <person name="Medina N."/>
            <person name="Mansoor H."/>
            <person name="Pryor M."/>
            <person name="Duthoy S."/>
            <person name="Grondin S."/>
            <person name="Lacroix C."/>
            <person name="Monsempe C."/>
            <person name="Simon S."/>
            <person name="Harris B."/>
            <person name="Atkin R."/>
            <person name="Doggett J."/>
            <person name="Mayes R."/>
            <person name="Keating L."/>
            <person name="Wheeler P.R."/>
            <person name="Parkhill J."/>
            <person name="Barrell B.G."/>
            <person name="Cole S.T."/>
            <person name="Gordon S.V."/>
            <person name="Hewinson R.G."/>
        </authorList>
    </citation>
    <scope>NUCLEOTIDE SEQUENCE [LARGE SCALE GENOMIC DNA]</scope>
    <source>
        <strain>ATCC BAA-935 / AF2122/97</strain>
    </source>
</reference>
<reference key="2">
    <citation type="journal article" date="2017" name="Genome Announc.">
        <title>Updated reference genome sequence and annotation of Mycobacterium bovis AF2122/97.</title>
        <authorList>
            <person name="Malone K.M."/>
            <person name="Farrell D."/>
            <person name="Stuber T.P."/>
            <person name="Schubert O.T."/>
            <person name="Aebersold R."/>
            <person name="Robbe-Austerman S."/>
            <person name="Gordon S.V."/>
        </authorList>
    </citation>
    <scope>NUCLEOTIDE SEQUENCE [LARGE SCALE GENOMIC DNA]</scope>
    <scope>GENOME REANNOTATION</scope>
    <source>
        <strain>ATCC BAA-935 / AF2122/97</strain>
    </source>
</reference>
<protein>
    <recommendedName>
        <fullName evidence="1">2-C-methyl-D-erythritol 2,4-cyclodiphosphate synthase</fullName>
        <shortName evidence="1">MECDP-synthase</shortName>
        <shortName evidence="1">MECPP-synthase</shortName>
        <shortName evidence="1">MECPS</shortName>
        <ecNumber evidence="1">4.6.1.12</ecNumber>
    </recommendedName>
</protein>
<sequence>MNQLPRVGLGTDVHPIEPGRPCWLVGLLFPSADGCAGHSDGDVAVHALCDAVLSAAGLGDIGEVFGVDDPRWQGVSGADMLRHVVVLITQHGYRVGNAVVQVIGNRPKIGWRRLEAQAVLSRLLNAPVSVSATTTDGLGLTGRGEGLAAIATALVVSLR</sequence>
<accession>P65184</accession>
<accession>A0A1R3Y4Q9</accession>
<accession>P96863</accession>
<accession>X2BNN3</accession>
<feature type="chain" id="PRO_0000189481" description="2-C-methyl-D-erythritol 2,4-cyclodiphosphate synthase">
    <location>
        <begin position="1"/>
        <end position="159"/>
    </location>
</feature>
<feature type="binding site" evidence="1">
    <location>
        <begin position="12"/>
        <end position="14"/>
    </location>
    <ligand>
        <name>4-CDP-2-C-methyl-D-erythritol 2-phosphate</name>
        <dbReference type="ChEBI" id="CHEBI:57919"/>
    </ligand>
</feature>
<feature type="binding site" evidence="1">
    <location>
        <position position="12"/>
    </location>
    <ligand>
        <name>a divalent metal cation</name>
        <dbReference type="ChEBI" id="CHEBI:60240"/>
    </ligand>
</feature>
<feature type="binding site" evidence="1">
    <location>
        <position position="14"/>
    </location>
    <ligand>
        <name>a divalent metal cation</name>
        <dbReference type="ChEBI" id="CHEBI:60240"/>
    </ligand>
</feature>
<feature type="binding site" evidence="1">
    <location>
        <begin position="38"/>
        <end position="39"/>
    </location>
    <ligand>
        <name>4-CDP-2-C-methyl-D-erythritol 2-phosphate</name>
        <dbReference type="ChEBI" id="CHEBI:57919"/>
    </ligand>
</feature>
<feature type="binding site" evidence="1">
    <location>
        <position position="46"/>
    </location>
    <ligand>
        <name>a divalent metal cation</name>
        <dbReference type="ChEBI" id="CHEBI:60240"/>
    </ligand>
</feature>
<feature type="binding site" evidence="1">
    <location>
        <begin position="60"/>
        <end position="62"/>
    </location>
    <ligand>
        <name>4-CDP-2-C-methyl-D-erythritol 2-phosphate</name>
        <dbReference type="ChEBI" id="CHEBI:57919"/>
    </ligand>
</feature>
<feature type="binding site" evidence="1">
    <location>
        <begin position="133"/>
        <end position="136"/>
    </location>
    <ligand>
        <name>4-CDP-2-C-methyl-D-erythritol 2-phosphate</name>
        <dbReference type="ChEBI" id="CHEBI:57919"/>
    </ligand>
</feature>
<feature type="binding site" evidence="1">
    <location>
        <position position="143"/>
    </location>
    <ligand>
        <name>4-CDP-2-C-methyl-D-erythritol 2-phosphate</name>
        <dbReference type="ChEBI" id="CHEBI:57919"/>
    </ligand>
</feature>
<feature type="site" description="Transition state stabilizer" evidence="1">
    <location>
        <position position="38"/>
    </location>
</feature>
<feature type="site" description="Transition state stabilizer" evidence="1">
    <location>
        <position position="134"/>
    </location>
</feature>
<proteinExistence type="inferred from homology"/>
<dbReference type="EC" id="4.6.1.12" evidence="1"/>
<dbReference type="EMBL" id="LT708304">
    <property type="protein sequence ID" value="SIU02239.1"/>
    <property type="molecule type" value="Genomic_DNA"/>
</dbReference>
<dbReference type="RefSeq" id="NP_857251.1">
    <property type="nucleotide sequence ID" value="NC_002945.3"/>
</dbReference>
<dbReference type="RefSeq" id="WP_003419432.1">
    <property type="nucleotide sequence ID" value="NC_002945.4"/>
</dbReference>
<dbReference type="SMR" id="P65184"/>
<dbReference type="GeneID" id="45427569"/>
<dbReference type="KEGG" id="mbo:BQ2027_MB3612C"/>
<dbReference type="PATRIC" id="fig|233413.5.peg.3958"/>
<dbReference type="UniPathway" id="UPA00056">
    <property type="reaction ID" value="UER00095"/>
</dbReference>
<dbReference type="Proteomes" id="UP000001419">
    <property type="component" value="Chromosome"/>
</dbReference>
<dbReference type="GO" id="GO:0008685">
    <property type="term" value="F:2-C-methyl-D-erythritol 2,4-cyclodiphosphate synthase activity"/>
    <property type="evidence" value="ECO:0007669"/>
    <property type="project" value="UniProtKB-UniRule"/>
</dbReference>
<dbReference type="GO" id="GO:0046872">
    <property type="term" value="F:metal ion binding"/>
    <property type="evidence" value="ECO:0007669"/>
    <property type="project" value="UniProtKB-KW"/>
</dbReference>
<dbReference type="GO" id="GO:0019288">
    <property type="term" value="P:isopentenyl diphosphate biosynthetic process, methylerythritol 4-phosphate pathway"/>
    <property type="evidence" value="ECO:0007669"/>
    <property type="project" value="UniProtKB-UniRule"/>
</dbReference>
<dbReference type="GO" id="GO:0016114">
    <property type="term" value="P:terpenoid biosynthetic process"/>
    <property type="evidence" value="ECO:0007669"/>
    <property type="project" value="InterPro"/>
</dbReference>
<dbReference type="CDD" id="cd00554">
    <property type="entry name" value="MECDP_synthase"/>
    <property type="match status" value="1"/>
</dbReference>
<dbReference type="FunFam" id="3.30.1330.50:FF:000003">
    <property type="entry name" value="2-C-methyl-D-erythritol 2,4-cyclodiphosphate synthase"/>
    <property type="match status" value="1"/>
</dbReference>
<dbReference type="Gene3D" id="3.30.1330.50">
    <property type="entry name" value="2-C-methyl-D-erythritol 2,4-cyclodiphosphate synthase"/>
    <property type="match status" value="1"/>
</dbReference>
<dbReference type="HAMAP" id="MF_00107">
    <property type="entry name" value="IspF"/>
    <property type="match status" value="1"/>
</dbReference>
<dbReference type="InterPro" id="IPR003526">
    <property type="entry name" value="MECDP_synthase"/>
</dbReference>
<dbReference type="InterPro" id="IPR020555">
    <property type="entry name" value="MECDP_synthase_CS"/>
</dbReference>
<dbReference type="InterPro" id="IPR036571">
    <property type="entry name" value="MECDP_synthase_sf"/>
</dbReference>
<dbReference type="NCBIfam" id="TIGR00151">
    <property type="entry name" value="ispF"/>
    <property type="match status" value="1"/>
</dbReference>
<dbReference type="PANTHER" id="PTHR43181">
    <property type="entry name" value="2-C-METHYL-D-ERYTHRITOL 2,4-CYCLODIPHOSPHATE SYNTHASE, CHLOROPLASTIC"/>
    <property type="match status" value="1"/>
</dbReference>
<dbReference type="PANTHER" id="PTHR43181:SF1">
    <property type="entry name" value="2-C-METHYL-D-ERYTHRITOL 2,4-CYCLODIPHOSPHATE SYNTHASE, CHLOROPLASTIC"/>
    <property type="match status" value="1"/>
</dbReference>
<dbReference type="Pfam" id="PF02542">
    <property type="entry name" value="YgbB"/>
    <property type="match status" value="1"/>
</dbReference>
<dbReference type="SUPFAM" id="SSF69765">
    <property type="entry name" value="IpsF-like"/>
    <property type="match status" value="1"/>
</dbReference>
<dbReference type="PROSITE" id="PS01350">
    <property type="entry name" value="ISPF"/>
    <property type="match status" value="1"/>
</dbReference>
<organism>
    <name type="scientific">Mycobacterium bovis (strain ATCC BAA-935 / AF2122/97)</name>
    <dbReference type="NCBI Taxonomy" id="233413"/>
    <lineage>
        <taxon>Bacteria</taxon>
        <taxon>Bacillati</taxon>
        <taxon>Actinomycetota</taxon>
        <taxon>Actinomycetes</taxon>
        <taxon>Mycobacteriales</taxon>
        <taxon>Mycobacteriaceae</taxon>
        <taxon>Mycobacterium</taxon>
        <taxon>Mycobacterium tuberculosis complex</taxon>
    </lineage>
</organism>
<keyword id="KW-0414">Isoprene biosynthesis</keyword>
<keyword id="KW-0456">Lyase</keyword>
<keyword id="KW-0479">Metal-binding</keyword>
<keyword id="KW-1185">Reference proteome</keyword>
<name>ISPF_MYCBO</name>